<dbReference type="EMBL" id="AF022779">
    <property type="protein sequence ID" value="AAC79196.1"/>
    <property type="molecule type" value="Genomic_DNA"/>
</dbReference>
<dbReference type="PIR" id="T44065">
    <property type="entry name" value="T44065"/>
</dbReference>
<dbReference type="GO" id="GO:1990904">
    <property type="term" value="C:ribonucleoprotein complex"/>
    <property type="evidence" value="ECO:0007669"/>
    <property type="project" value="UniProtKB-KW"/>
</dbReference>
<dbReference type="GO" id="GO:0005840">
    <property type="term" value="C:ribosome"/>
    <property type="evidence" value="ECO:0007669"/>
    <property type="project" value="UniProtKB-KW"/>
</dbReference>
<dbReference type="GO" id="GO:0019843">
    <property type="term" value="F:rRNA binding"/>
    <property type="evidence" value="ECO:0007669"/>
    <property type="project" value="UniProtKB-KW"/>
</dbReference>
<dbReference type="Gene3D" id="1.10.455.10">
    <property type="entry name" value="Ribosomal protein S7 domain"/>
    <property type="match status" value="1"/>
</dbReference>
<dbReference type="InterPro" id="IPR023798">
    <property type="entry name" value="Ribosomal_uS7_dom"/>
</dbReference>
<dbReference type="InterPro" id="IPR036823">
    <property type="entry name" value="Ribosomal_uS7_dom_sf"/>
</dbReference>
<dbReference type="Pfam" id="PF00177">
    <property type="entry name" value="Ribosomal_S7"/>
    <property type="match status" value="1"/>
</dbReference>
<dbReference type="SUPFAM" id="SSF47973">
    <property type="entry name" value="Ribosomal protein S7"/>
    <property type="match status" value="1"/>
</dbReference>
<accession>O93636</accession>
<organism>
    <name type="scientific">Methanococcoides methylutens</name>
    <dbReference type="NCBI Taxonomy" id="2226"/>
    <lineage>
        <taxon>Archaea</taxon>
        <taxon>Methanobacteriati</taxon>
        <taxon>Methanobacteriota</taxon>
        <taxon>Stenosarchaea group</taxon>
        <taxon>Methanomicrobia</taxon>
        <taxon>Methanosarcinales</taxon>
        <taxon>Methanosarcinaceae</taxon>
        <taxon>Methanococcoides</taxon>
    </lineage>
</organism>
<comment type="function">
    <text evidence="1">One of the primary rRNA binding proteins, it binds directly to 16S rRNA where it nucleates assembly of the head domain of the 30S subunit. Is located at the subunit interface close to the decoding center (By similarity).</text>
</comment>
<comment type="subunit">
    <text>Part of the 30S ribosomal subunit.</text>
</comment>
<comment type="similarity">
    <text evidence="2">Belongs to the universal ribosomal protein uS7 family.</text>
</comment>
<protein>
    <recommendedName>
        <fullName evidence="2">Small ribosomal subunit protein uS7</fullName>
    </recommendedName>
    <alternativeName>
        <fullName>30S ribosomal protein S7</fullName>
    </alternativeName>
</protein>
<sequence length="69" mass="7492">TKSSRYCTTEGXDTALRHXPIGANQSAFKSKRXASESLASELIAASNRDAKCFSINRKDGKERVAKAAR</sequence>
<proteinExistence type="inferred from homology"/>
<name>RS7_METMT</name>
<reference key="1">
    <citation type="journal article" date="1998" name="FEBS Lett.">
        <title>Archaeal cold-adapted proteins: structural and evolutionary analysis of the elongation factor 2 proteins from psychrophilic, mesophilic and thermophilic methanogens.</title>
        <authorList>
            <person name="Thomas T."/>
            <person name="Cavicchioli R."/>
        </authorList>
    </citation>
    <scope>NUCLEOTIDE SEQUENCE [GENOMIC DNA]</scope>
    <source>
        <strain>ATCC 33938 / DSM 2657 / BCRC 16168 / OCM 158 / TMA-10</strain>
    </source>
</reference>
<feature type="chain" id="PRO_0000124403" description="Small ribosomal subunit protein uS7">
    <location>
        <begin position="1" status="less than"/>
        <end position="69"/>
    </location>
</feature>
<feature type="non-terminal residue">
    <location>
        <position position="1"/>
    </location>
</feature>
<keyword id="KW-0687">Ribonucleoprotein</keyword>
<keyword id="KW-0689">Ribosomal protein</keyword>
<keyword id="KW-0694">RNA-binding</keyword>
<keyword id="KW-0699">rRNA-binding</keyword>
<evidence type="ECO:0000250" key="1"/>
<evidence type="ECO:0000305" key="2"/>
<gene>
    <name type="primary">rps7</name>
    <name type="synonym">s7</name>
</gene>